<protein>
    <recommendedName>
        <fullName>Zinc finger protein 184</fullName>
    </recommendedName>
</protein>
<dbReference type="EMBL" id="AK312804">
    <property type="protein sequence ID" value="BAG35662.1"/>
    <property type="molecule type" value="mRNA"/>
</dbReference>
<dbReference type="EMBL" id="AL021918">
    <property type="status" value="NOT_ANNOTATED_CDS"/>
    <property type="molecule type" value="Genomic_DNA"/>
</dbReference>
<dbReference type="EMBL" id="BC022992">
    <property type="protein sequence ID" value="AAH22992.1"/>
    <property type="molecule type" value="mRNA"/>
</dbReference>
<dbReference type="EMBL" id="U66561">
    <property type="protein sequence ID" value="AAC51180.1"/>
    <property type="molecule type" value="mRNA"/>
</dbReference>
<dbReference type="CCDS" id="CCDS4624.1"/>
<dbReference type="RefSeq" id="NP_001305820.1">
    <property type="nucleotide sequence ID" value="NM_001318891.2"/>
</dbReference>
<dbReference type="RefSeq" id="NP_001305821.1">
    <property type="nucleotide sequence ID" value="NM_001318892.2"/>
</dbReference>
<dbReference type="RefSeq" id="NP_001305822.1">
    <property type="nucleotide sequence ID" value="NM_001318893.1"/>
</dbReference>
<dbReference type="RefSeq" id="NP_001334761.1">
    <property type="nucleotide sequence ID" value="NM_001347832.1"/>
</dbReference>
<dbReference type="RefSeq" id="NP_009080.2">
    <property type="nucleotide sequence ID" value="NM_007149.3"/>
</dbReference>
<dbReference type="SMR" id="Q99676"/>
<dbReference type="BioGRID" id="113524">
    <property type="interactions" value="66"/>
</dbReference>
<dbReference type="FunCoup" id="Q99676">
    <property type="interactions" value="677"/>
</dbReference>
<dbReference type="IntAct" id="Q99676">
    <property type="interactions" value="55"/>
</dbReference>
<dbReference type="STRING" id="9606.ENSP00000211936"/>
<dbReference type="iPTMnet" id="Q99676"/>
<dbReference type="PhosphoSitePlus" id="Q99676"/>
<dbReference type="BioMuta" id="ZNF184"/>
<dbReference type="DMDM" id="313104299"/>
<dbReference type="jPOST" id="Q99676"/>
<dbReference type="MassIVE" id="Q99676"/>
<dbReference type="PaxDb" id="9606-ENSP00000211936"/>
<dbReference type="PeptideAtlas" id="Q99676"/>
<dbReference type="ProteomicsDB" id="78390"/>
<dbReference type="Pumba" id="Q99676"/>
<dbReference type="Antibodypedia" id="824">
    <property type="antibodies" value="60 antibodies from 15 providers"/>
</dbReference>
<dbReference type="DNASU" id="7738"/>
<dbReference type="Ensembl" id="ENST00000211936.10">
    <property type="protein sequence ID" value="ENSP00000211936.6"/>
    <property type="gene ID" value="ENSG00000096654.16"/>
</dbReference>
<dbReference type="Ensembl" id="ENST00000377419.1">
    <property type="protein sequence ID" value="ENSP00000366636.1"/>
    <property type="gene ID" value="ENSG00000096654.16"/>
</dbReference>
<dbReference type="Ensembl" id="ENST00000683788.1">
    <property type="protein sequence ID" value="ENSP00000508298.1"/>
    <property type="gene ID" value="ENSG00000096654.16"/>
</dbReference>
<dbReference type="GeneID" id="7738"/>
<dbReference type="KEGG" id="hsa:7738"/>
<dbReference type="MANE-Select" id="ENST00000683788.1">
    <property type="protein sequence ID" value="ENSP00000508298.1"/>
    <property type="RefSeq nucleotide sequence ID" value="NM_001318891.2"/>
    <property type="RefSeq protein sequence ID" value="NP_001305820.1"/>
</dbReference>
<dbReference type="UCSC" id="uc003nji.4">
    <property type="organism name" value="human"/>
</dbReference>
<dbReference type="AGR" id="HGNC:12975"/>
<dbReference type="CTD" id="7738"/>
<dbReference type="DisGeNET" id="7738"/>
<dbReference type="GeneCards" id="ZNF184"/>
<dbReference type="HGNC" id="HGNC:12975">
    <property type="gene designation" value="ZNF184"/>
</dbReference>
<dbReference type="HPA" id="ENSG00000096654">
    <property type="expression patterns" value="Low tissue specificity"/>
</dbReference>
<dbReference type="MalaCards" id="ZNF184"/>
<dbReference type="MIM" id="602277">
    <property type="type" value="gene"/>
</dbReference>
<dbReference type="neXtProt" id="NX_Q99676"/>
<dbReference type="OpenTargets" id="ENSG00000096654"/>
<dbReference type="PharmGKB" id="PA37557"/>
<dbReference type="VEuPathDB" id="HostDB:ENSG00000096654"/>
<dbReference type="eggNOG" id="KOG1721">
    <property type="taxonomic scope" value="Eukaryota"/>
</dbReference>
<dbReference type="GeneTree" id="ENSGT00940000162941"/>
<dbReference type="HOGENOM" id="CLU_002678_44_5_1"/>
<dbReference type="InParanoid" id="Q99676"/>
<dbReference type="OMA" id="TIPTWER"/>
<dbReference type="OrthoDB" id="9411774at2759"/>
<dbReference type="PAN-GO" id="Q99676">
    <property type="GO annotations" value="4 GO annotations based on evolutionary models"/>
</dbReference>
<dbReference type="PhylomeDB" id="Q99676"/>
<dbReference type="TreeFam" id="TF350822"/>
<dbReference type="PathwayCommons" id="Q99676"/>
<dbReference type="Reactome" id="R-HSA-212436">
    <property type="pathway name" value="Generic Transcription Pathway"/>
</dbReference>
<dbReference type="SignaLink" id="Q99676"/>
<dbReference type="BioGRID-ORCS" id="7738">
    <property type="hits" value="7 hits in 1171 CRISPR screens"/>
</dbReference>
<dbReference type="ChiTaRS" id="ZNF184">
    <property type="organism name" value="human"/>
</dbReference>
<dbReference type="GeneWiki" id="ZNF184"/>
<dbReference type="GenomeRNAi" id="7738"/>
<dbReference type="Pharos" id="Q99676">
    <property type="development level" value="Tbio"/>
</dbReference>
<dbReference type="PRO" id="PR:Q99676"/>
<dbReference type="Proteomes" id="UP000005640">
    <property type="component" value="Chromosome 6"/>
</dbReference>
<dbReference type="RNAct" id="Q99676">
    <property type="molecule type" value="protein"/>
</dbReference>
<dbReference type="Bgee" id="ENSG00000096654">
    <property type="expression patterns" value="Expressed in Brodmann (1909) area 23 and 177 other cell types or tissues"/>
</dbReference>
<dbReference type="ExpressionAtlas" id="Q99676">
    <property type="expression patterns" value="baseline and differential"/>
</dbReference>
<dbReference type="GO" id="GO:0005634">
    <property type="term" value="C:nucleus"/>
    <property type="evidence" value="ECO:0000318"/>
    <property type="project" value="GO_Central"/>
</dbReference>
<dbReference type="GO" id="GO:0000981">
    <property type="term" value="F:DNA-binding transcription factor activity, RNA polymerase II-specific"/>
    <property type="evidence" value="ECO:0000318"/>
    <property type="project" value="GO_Central"/>
</dbReference>
<dbReference type="GO" id="GO:0000978">
    <property type="term" value="F:RNA polymerase II cis-regulatory region sequence-specific DNA binding"/>
    <property type="evidence" value="ECO:0000318"/>
    <property type="project" value="GO_Central"/>
</dbReference>
<dbReference type="GO" id="GO:0008270">
    <property type="term" value="F:zinc ion binding"/>
    <property type="evidence" value="ECO:0000303"/>
    <property type="project" value="UniProtKB"/>
</dbReference>
<dbReference type="GO" id="GO:0006357">
    <property type="term" value="P:regulation of transcription by RNA polymerase II"/>
    <property type="evidence" value="ECO:0000318"/>
    <property type="project" value="GO_Central"/>
</dbReference>
<dbReference type="CDD" id="cd07765">
    <property type="entry name" value="KRAB_A-box"/>
    <property type="match status" value="1"/>
</dbReference>
<dbReference type="FunFam" id="3.30.160.60:FF:004137">
    <property type="match status" value="1"/>
</dbReference>
<dbReference type="FunFam" id="3.30.160.60:FF:000144">
    <property type="entry name" value="zinc finger protein 181 isoform X1"/>
    <property type="match status" value="1"/>
</dbReference>
<dbReference type="FunFam" id="3.30.160.60:FF:000638">
    <property type="entry name" value="Zinc finger protein 184"/>
    <property type="match status" value="1"/>
</dbReference>
<dbReference type="FunFam" id="3.30.160.60:FF:000824">
    <property type="entry name" value="Zinc finger protein 184"/>
    <property type="match status" value="1"/>
</dbReference>
<dbReference type="FunFam" id="3.30.160.60:FF:001085">
    <property type="entry name" value="Zinc finger protein 184"/>
    <property type="match status" value="1"/>
</dbReference>
<dbReference type="FunFam" id="3.30.160.60:FF:001100">
    <property type="entry name" value="Zinc finger protein 184"/>
    <property type="match status" value="1"/>
</dbReference>
<dbReference type="FunFam" id="3.30.160.60:FF:001158">
    <property type="entry name" value="zinc finger protein 22"/>
    <property type="match status" value="1"/>
</dbReference>
<dbReference type="FunFam" id="3.30.160.60:FF:000252">
    <property type="entry name" value="Zinc finger protein 287"/>
    <property type="match status" value="1"/>
</dbReference>
<dbReference type="FunFam" id="3.30.160.60:FF:002278">
    <property type="entry name" value="Zinc finger protein 320"/>
    <property type="match status" value="1"/>
</dbReference>
<dbReference type="FunFam" id="3.30.160.60:FF:002343">
    <property type="entry name" value="Zinc finger protein 33A"/>
    <property type="match status" value="1"/>
</dbReference>
<dbReference type="FunFam" id="3.30.160.60:FF:000016">
    <property type="entry name" value="zinc finger protein 37 homolog"/>
    <property type="match status" value="3"/>
</dbReference>
<dbReference type="FunFam" id="3.30.160.60:FF:000519">
    <property type="entry name" value="Zinc finger protein 470"/>
    <property type="match status" value="1"/>
</dbReference>
<dbReference type="FunFam" id="3.30.160.60:FF:002090">
    <property type="entry name" value="Zinc finger protein 473"/>
    <property type="match status" value="5"/>
</dbReference>
<dbReference type="FunFam" id="3.30.160.60:FF:000737">
    <property type="entry name" value="Zinc finger protein 565"/>
    <property type="match status" value="1"/>
</dbReference>
<dbReference type="Gene3D" id="6.10.140.140">
    <property type="match status" value="1"/>
</dbReference>
<dbReference type="Gene3D" id="3.30.160.60">
    <property type="entry name" value="Classic Zinc Finger"/>
    <property type="match status" value="19"/>
</dbReference>
<dbReference type="InterPro" id="IPR001909">
    <property type="entry name" value="KRAB"/>
</dbReference>
<dbReference type="InterPro" id="IPR036051">
    <property type="entry name" value="KRAB_dom_sf"/>
</dbReference>
<dbReference type="InterPro" id="IPR050331">
    <property type="entry name" value="Zinc_finger"/>
</dbReference>
<dbReference type="InterPro" id="IPR036236">
    <property type="entry name" value="Znf_C2H2_sf"/>
</dbReference>
<dbReference type="InterPro" id="IPR013087">
    <property type="entry name" value="Znf_C2H2_type"/>
</dbReference>
<dbReference type="PANTHER" id="PTHR16515">
    <property type="entry name" value="PR DOMAIN ZINC FINGER PROTEIN"/>
    <property type="match status" value="1"/>
</dbReference>
<dbReference type="PANTHER" id="PTHR16515:SF57">
    <property type="entry name" value="ZINC FINGER PROTEIN 154-LIKE"/>
    <property type="match status" value="1"/>
</dbReference>
<dbReference type="Pfam" id="PF01352">
    <property type="entry name" value="KRAB"/>
    <property type="match status" value="1"/>
</dbReference>
<dbReference type="Pfam" id="PF00096">
    <property type="entry name" value="zf-C2H2"/>
    <property type="match status" value="17"/>
</dbReference>
<dbReference type="Pfam" id="PF13465">
    <property type="entry name" value="zf-H2C2_2"/>
    <property type="match status" value="1"/>
</dbReference>
<dbReference type="SMART" id="SM00349">
    <property type="entry name" value="KRAB"/>
    <property type="match status" value="1"/>
</dbReference>
<dbReference type="SMART" id="SM00355">
    <property type="entry name" value="ZnF_C2H2"/>
    <property type="match status" value="19"/>
</dbReference>
<dbReference type="SUPFAM" id="SSF57667">
    <property type="entry name" value="beta-beta-alpha zinc fingers"/>
    <property type="match status" value="10"/>
</dbReference>
<dbReference type="SUPFAM" id="SSF109640">
    <property type="entry name" value="KRAB domain (Kruppel-associated box)"/>
    <property type="match status" value="1"/>
</dbReference>
<dbReference type="PROSITE" id="PS50805">
    <property type="entry name" value="KRAB"/>
    <property type="match status" value="1"/>
</dbReference>
<dbReference type="PROSITE" id="PS00028">
    <property type="entry name" value="ZINC_FINGER_C2H2_1"/>
    <property type="match status" value="19"/>
</dbReference>
<dbReference type="PROSITE" id="PS50157">
    <property type="entry name" value="ZINC_FINGER_C2H2_2"/>
    <property type="match status" value="19"/>
</dbReference>
<comment type="function">
    <text>May be involved in transcriptional regulation.</text>
</comment>
<comment type="subcellular location">
    <subcellularLocation>
        <location evidence="7">Nucleus</location>
    </subcellularLocation>
</comment>
<comment type="tissue specificity">
    <text>Predominant expression in testis.</text>
</comment>
<comment type="similarity">
    <text evidence="7">Belongs to the krueppel C2H2-type zinc-finger protein family.</text>
</comment>
<evidence type="ECO:0000255" key="1">
    <source>
        <dbReference type="PROSITE-ProRule" id="PRU00042"/>
    </source>
</evidence>
<evidence type="ECO:0000255" key="2">
    <source>
        <dbReference type="PROSITE-ProRule" id="PRU00119"/>
    </source>
</evidence>
<evidence type="ECO:0000256" key="3">
    <source>
        <dbReference type="SAM" id="MobiDB-lite"/>
    </source>
</evidence>
<evidence type="ECO:0000269" key="4">
    <source>
    </source>
</evidence>
<evidence type="ECO:0000269" key="5">
    <source>
    </source>
</evidence>
<evidence type="ECO:0000269" key="6">
    <source>
    </source>
</evidence>
<evidence type="ECO:0000305" key="7"/>
<evidence type="ECO:0007744" key="8">
    <source>
    </source>
</evidence>
<evidence type="ECO:0007744" key="9">
    <source>
    </source>
</evidence>
<evidence type="ECO:0007744" key="10">
    <source>
    </source>
</evidence>
<reference key="1">
    <citation type="journal article" date="2004" name="Nat. Genet.">
        <title>Complete sequencing and characterization of 21,243 full-length human cDNAs.</title>
        <authorList>
            <person name="Ota T."/>
            <person name="Suzuki Y."/>
            <person name="Nishikawa T."/>
            <person name="Otsuki T."/>
            <person name="Sugiyama T."/>
            <person name="Irie R."/>
            <person name="Wakamatsu A."/>
            <person name="Hayashi K."/>
            <person name="Sato H."/>
            <person name="Nagai K."/>
            <person name="Kimura K."/>
            <person name="Makita H."/>
            <person name="Sekine M."/>
            <person name="Obayashi M."/>
            <person name="Nishi T."/>
            <person name="Shibahara T."/>
            <person name="Tanaka T."/>
            <person name="Ishii S."/>
            <person name="Yamamoto J."/>
            <person name="Saito K."/>
            <person name="Kawai Y."/>
            <person name="Isono Y."/>
            <person name="Nakamura Y."/>
            <person name="Nagahari K."/>
            <person name="Murakami K."/>
            <person name="Yasuda T."/>
            <person name="Iwayanagi T."/>
            <person name="Wagatsuma M."/>
            <person name="Shiratori A."/>
            <person name="Sudo H."/>
            <person name="Hosoiri T."/>
            <person name="Kaku Y."/>
            <person name="Kodaira H."/>
            <person name="Kondo H."/>
            <person name="Sugawara M."/>
            <person name="Takahashi M."/>
            <person name="Kanda K."/>
            <person name="Yokoi T."/>
            <person name="Furuya T."/>
            <person name="Kikkawa E."/>
            <person name="Omura Y."/>
            <person name="Abe K."/>
            <person name="Kamihara K."/>
            <person name="Katsuta N."/>
            <person name="Sato K."/>
            <person name="Tanikawa M."/>
            <person name="Yamazaki M."/>
            <person name="Ninomiya K."/>
            <person name="Ishibashi T."/>
            <person name="Yamashita H."/>
            <person name="Murakawa K."/>
            <person name="Fujimori K."/>
            <person name="Tanai H."/>
            <person name="Kimata M."/>
            <person name="Watanabe M."/>
            <person name="Hiraoka S."/>
            <person name="Chiba Y."/>
            <person name="Ishida S."/>
            <person name="Ono Y."/>
            <person name="Takiguchi S."/>
            <person name="Watanabe S."/>
            <person name="Yosida M."/>
            <person name="Hotuta T."/>
            <person name="Kusano J."/>
            <person name="Kanehori K."/>
            <person name="Takahashi-Fujii A."/>
            <person name="Hara H."/>
            <person name="Tanase T.-O."/>
            <person name="Nomura Y."/>
            <person name="Togiya S."/>
            <person name="Komai F."/>
            <person name="Hara R."/>
            <person name="Takeuchi K."/>
            <person name="Arita M."/>
            <person name="Imose N."/>
            <person name="Musashino K."/>
            <person name="Yuuki H."/>
            <person name="Oshima A."/>
            <person name="Sasaki N."/>
            <person name="Aotsuka S."/>
            <person name="Yoshikawa Y."/>
            <person name="Matsunawa H."/>
            <person name="Ichihara T."/>
            <person name="Shiohata N."/>
            <person name="Sano S."/>
            <person name="Moriya S."/>
            <person name="Momiyama H."/>
            <person name="Satoh N."/>
            <person name="Takami S."/>
            <person name="Terashima Y."/>
            <person name="Suzuki O."/>
            <person name="Nakagawa S."/>
            <person name="Senoh A."/>
            <person name="Mizoguchi H."/>
            <person name="Goto Y."/>
            <person name="Shimizu F."/>
            <person name="Wakebe H."/>
            <person name="Hishigaki H."/>
            <person name="Watanabe T."/>
            <person name="Sugiyama A."/>
            <person name="Takemoto M."/>
            <person name="Kawakami B."/>
            <person name="Yamazaki M."/>
            <person name="Watanabe K."/>
            <person name="Kumagai A."/>
            <person name="Itakura S."/>
            <person name="Fukuzumi Y."/>
            <person name="Fujimori Y."/>
            <person name="Komiyama M."/>
            <person name="Tashiro H."/>
            <person name="Tanigami A."/>
            <person name="Fujiwara T."/>
            <person name="Ono T."/>
            <person name="Yamada K."/>
            <person name="Fujii Y."/>
            <person name="Ozaki K."/>
            <person name="Hirao M."/>
            <person name="Ohmori Y."/>
            <person name="Kawabata A."/>
            <person name="Hikiji T."/>
            <person name="Kobatake N."/>
            <person name="Inagaki H."/>
            <person name="Ikema Y."/>
            <person name="Okamoto S."/>
            <person name="Okitani R."/>
            <person name="Kawakami T."/>
            <person name="Noguchi S."/>
            <person name="Itoh T."/>
            <person name="Shigeta K."/>
            <person name="Senba T."/>
            <person name="Matsumura K."/>
            <person name="Nakajima Y."/>
            <person name="Mizuno T."/>
            <person name="Morinaga M."/>
            <person name="Sasaki M."/>
            <person name="Togashi T."/>
            <person name="Oyama M."/>
            <person name="Hata H."/>
            <person name="Watanabe M."/>
            <person name="Komatsu T."/>
            <person name="Mizushima-Sugano J."/>
            <person name="Satoh T."/>
            <person name="Shirai Y."/>
            <person name="Takahashi Y."/>
            <person name="Nakagawa K."/>
            <person name="Okumura K."/>
            <person name="Nagase T."/>
            <person name="Nomura N."/>
            <person name="Kikuchi H."/>
            <person name="Masuho Y."/>
            <person name="Yamashita R."/>
            <person name="Nakai K."/>
            <person name="Yada T."/>
            <person name="Nakamura Y."/>
            <person name="Ohara O."/>
            <person name="Isogai T."/>
            <person name="Sugano S."/>
        </authorList>
    </citation>
    <scope>NUCLEOTIDE SEQUENCE [LARGE SCALE MRNA]</scope>
    <scope>VARIANT SER-27</scope>
    <source>
        <tissue>Testis</tissue>
    </source>
</reference>
<reference key="2">
    <citation type="journal article" date="2003" name="Nature">
        <title>The DNA sequence and analysis of human chromosome 6.</title>
        <authorList>
            <person name="Mungall A.J."/>
            <person name="Palmer S.A."/>
            <person name="Sims S.K."/>
            <person name="Edwards C.A."/>
            <person name="Ashurst J.L."/>
            <person name="Wilming L."/>
            <person name="Jones M.C."/>
            <person name="Horton R."/>
            <person name="Hunt S.E."/>
            <person name="Scott C.E."/>
            <person name="Gilbert J.G.R."/>
            <person name="Clamp M.E."/>
            <person name="Bethel G."/>
            <person name="Milne S."/>
            <person name="Ainscough R."/>
            <person name="Almeida J.P."/>
            <person name="Ambrose K.D."/>
            <person name="Andrews T.D."/>
            <person name="Ashwell R.I.S."/>
            <person name="Babbage A.K."/>
            <person name="Bagguley C.L."/>
            <person name="Bailey J."/>
            <person name="Banerjee R."/>
            <person name="Barker D.J."/>
            <person name="Barlow K.F."/>
            <person name="Bates K."/>
            <person name="Beare D.M."/>
            <person name="Beasley H."/>
            <person name="Beasley O."/>
            <person name="Bird C.P."/>
            <person name="Blakey S.E."/>
            <person name="Bray-Allen S."/>
            <person name="Brook J."/>
            <person name="Brown A.J."/>
            <person name="Brown J.Y."/>
            <person name="Burford D.C."/>
            <person name="Burrill W."/>
            <person name="Burton J."/>
            <person name="Carder C."/>
            <person name="Carter N.P."/>
            <person name="Chapman J.C."/>
            <person name="Clark S.Y."/>
            <person name="Clark G."/>
            <person name="Clee C.M."/>
            <person name="Clegg S."/>
            <person name="Cobley V."/>
            <person name="Collier R.E."/>
            <person name="Collins J.E."/>
            <person name="Colman L.K."/>
            <person name="Corby N.R."/>
            <person name="Coville G.J."/>
            <person name="Culley K.M."/>
            <person name="Dhami P."/>
            <person name="Davies J."/>
            <person name="Dunn M."/>
            <person name="Earthrowl M.E."/>
            <person name="Ellington A.E."/>
            <person name="Evans K.A."/>
            <person name="Faulkner L."/>
            <person name="Francis M.D."/>
            <person name="Frankish A."/>
            <person name="Frankland J."/>
            <person name="French L."/>
            <person name="Garner P."/>
            <person name="Garnett J."/>
            <person name="Ghori M.J."/>
            <person name="Gilby L.M."/>
            <person name="Gillson C.J."/>
            <person name="Glithero R.J."/>
            <person name="Grafham D.V."/>
            <person name="Grant M."/>
            <person name="Gribble S."/>
            <person name="Griffiths C."/>
            <person name="Griffiths M.N.D."/>
            <person name="Hall R."/>
            <person name="Halls K.S."/>
            <person name="Hammond S."/>
            <person name="Harley J.L."/>
            <person name="Hart E.A."/>
            <person name="Heath P.D."/>
            <person name="Heathcott R."/>
            <person name="Holmes S.J."/>
            <person name="Howden P.J."/>
            <person name="Howe K.L."/>
            <person name="Howell G.R."/>
            <person name="Huckle E."/>
            <person name="Humphray S.J."/>
            <person name="Humphries M.D."/>
            <person name="Hunt A.R."/>
            <person name="Johnson C.M."/>
            <person name="Joy A.A."/>
            <person name="Kay M."/>
            <person name="Keenan S.J."/>
            <person name="Kimberley A.M."/>
            <person name="King A."/>
            <person name="Laird G.K."/>
            <person name="Langford C."/>
            <person name="Lawlor S."/>
            <person name="Leongamornlert D.A."/>
            <person name="Leversha M."/>
            <person name="Lloyd C.R."/>
            <person name="Lloyd D.M."/>
            <person name="Loveland J.E."/>
            <person name="Lovell J."/>
            <person name="Martin S."/>
            <person name="Mashreghi-Mohammadi M."/>
            <person name="Maslen G.L."/>
            <person name="Matthews L."/>
            <person name="McCann O.T."/>
            <person name="McLaren S.J."/>
            <person name="McLay K."/>
            <person name="McMurray A."/>
            <person name="Moore M.J.F."/>
            <person name="Mullikin J.C."/>
            <person name="Niblett D."/>
            <person name="Nickerson T."/>
            <person name="Novik K.L."/>
            <person name="Oliver K."/>
            <person name="Overton-Larty E.K."/>
            <person name="Parker A."/>
            <person name="Patel R."/>
            <person name="Pearce A.V."/>
            <person name="Peck A.I."/>
            <person name="Phillimore B.J.C.T."/>
            <person name="Phillips S."/>
            <person name="Plumb R.W."/>
            <person name="Porter K.M."/>
            <person name="Ramsey Y."/>
            <person name="Ranby S.A."/>
            <person name="Rice C.M."/>
            <person name="Ross M.T."/>
            <person name="Searle S.M."/>
            <person name="Sehra H.K."/>
            <person name="Sheridan E."/>
            <person name="Skuce C.D."/>
            <person name="Smith S."/>
            <person name="Smith M."/>
            <person name="Spraggon L."/>
            <person name="Squares S.L."/>
            <person name="Steward C.A."/>
            <person name="Sycamore N."/>
            <person name="Tamlyn-Hall G."/>
            <person name="Tester J."/>
            <person name="Theaker A.J."/>
            <person name="Thomas D.W."/>
            <person name="Thorpe A."/>
            <person name="Tracey A."/>
            <person name="Tromans A."/>
            <person name="Tubby B."/>
            <person name="Wall M."/>
            <person name="Wallis J.M."/>
            <person name="West A.P."/>
            <person name="White S.S."/>
            <person name="Whitehead S.L."/>
            <person name="Whittaker H."/>
            <person name="Wild A."/>
            <person name="Willey D.J."/>
            <person name="Wilmer T.E."/>
            <person name="Wood J.M."/>
            <person name="Wray P.W."/>
            <person name="Wyatt J.C."/>
            <person name="Young L."/>
            <person name="Younger R.M."/>
            <person name="Bentley D.R."/>
            <person name="Coulson A."/>
            <person name="Durbin R.M."/>
            <person name="Hubbard T."/>
            <person name="Sulston J.E."/>
            <person name="Dunham I."/>
            <person name="Rogers J."/>
            <person name="Beck S."/>
        </authorList>
    </citation>
    <scope>NUCLEOTIDE SEQUENCE [LARGE SCALE GENOMIC DNA]</scope>
</reference>
<reference key="3">
    <citation type="journal article" date="2004" name="Genome Res.">
        <title>The status, quality, and expansion of the NIH full-length cDNA project: the Mammalian Gene Collection (MGC).</title>
        <authorList>
            <consortium name="The MGC Project Team"/>
        </authorList>
    </citation>
    <scope>NUCLEOTIDE SEQUENCE [LARGE SCALE MRNA]</scope>
    <scope>VARIANT SER-27</scope>
    <source>
        <tissue>Placenta</tissue>
    </source>
</reference>
<reference key="4">
    <citation type="journal article" date="1997" name="Genomics">
        <title>Identification of a novel Krueppel-related zinc finger gene (ZNF184) mapping to 6p21.3.</title>
        <authorList>
            <person name="Goldwurm S."/>
            <person name="Menzies M.L."/>
            <person name="Banyer J.L."/>
            <person name="Powell B.L.W."/>
            <person name="Jazwinska E.C."/>
        </authorList>
    </citation>
    <scope>NUCLEOTIDE SEQUENCE [MRNA] OF 26-751</scope>
    <scope>VARIANT SER-27</scope>
    <source>
        <tissue>Placenta</tissue>
    </source>
</reference>
<reference key="5">
    <citation type="journal article" date="2009" name="Sci. Signal.">
        <title>Quantitative phosphoproteomic analysis of T cell receptor signaling reveals system-wide modulation of protein-protein interactions.</title>
        <authorList>
            <person name="Mayya V."/>
            <person name="Lundgren D.H."/>
            <person name="Hwang S.-I."/>
            <person name="Rezaul K."/>
            <person name="Wu L."/>
            <person name="Eng J.K."/>
            <person name="Rodionov V."/>
            <person name="Han D.K."/>
        </authorList>
    </citation>
    <scope>PHOSPHORYLATION [LARGE SCALE ANALYSIS] AT SER-117 AND SER-122</scope>
    <scope>IDENTIFICATION BY MASS SPECTROMETRY [LARGE SCALE ANALYSIS]</scope>
    <source>
        <tissue>Leukemic T-cell</tissue>
    </source>
</reference>
<reference key="6">
    <citation type="journal article" date="2013" name="J. Proteome Res.">
        <title>Toward a comprehensive characterization of a human cancer cell phosphoproteome.</title>
        <authorList>
            <person name="Zhou H."/>
            <person name="Di Palma S."/>
            <person name="Preisinger C."/>
            <person name="Peng M."/>
            <person name="Polat A.N."/>
            <person name="Heck A.J."/>
            <person name="Mohammed S."/>
        </authorList>
    </citation>
    <scope>PHOSPHORYLATION [LARGE SCALE ANALYSIS] AT SER-117 AND SER-199</scope>
    <scope>IDENTIFICATION BY MASS SPECTROMETRY [LARGE SCALE ANALYSIS]</scope>
    <source>
        <tissue>Erythroleukemia</tissue>
    </source>
</reference>
<reference key="7">
    <citation type="journal article" date="2017" name="Nat. Struct. Mol. Biol.">
        <title>Site-specific mapping of the human SUMO proteome reveals co-modification with phosphorylation.</title>
        <authorList>
            <person name="Hendriks I.A."/>
            <person name="Lyon D."/>
            <person name="Young C."/>
            <person name="Jensen L.J."/>
            <person name="Vertegaal A.C."/>
            <person name="Nielsen M.L."/>
        </authorList>
    </citation>
    <scope>SUMOYLATION [LARGE SCALE ANALYSIS] AT LYS-206</scope>
    <scope>IDENTIFICATION BY MASS SPECTROMETRY [LARGE SCALE ANALYSIS]</scope>
</reference>
<organism>
    <name type="scientific">Homo sapiens</name>
    <name type="common">Human</name>
    <dbReference type="NCBI Taxonomy" id="9606"/>
    <lineage>
        <taxon>Eukaryota</taxon>
        <taxon>Metazoa</taxon>
        <taxon>Chordata</taxon>
        <taxon>Craniata</taxon>
        <taxon>Vertebrata</taxon>
        <taxon>Euteleostomi</taxon>
        <taxon>Mammalia</taxon>
        <taxon>Eutheria</taxon>
        <taxon>Euarchontoglires</taxon>
        <taxon>Primates</taxon>
        <taxon>Haplorrhini</taxon>
        <taxon>Catarrhini</taxon>
        <taxon>Hominidae</taxon>
        <taxon>Homo</taxon>
    </lineage>
</organism>
<name>ZN184_HUMAN</name>
<sequence length="751" mass="86174">MEDLSSPDSTLLQGGHNLLSSASFQEAVTFKDVIVDFTQEEWKQLDPGQRDLFRDVTLENYTHLVSIGLQVSKPDVISQLEQGTEPWIMEPSIPVGTCADWETRLENSVSAPEPDISEEELSPEVIVEKHKRDDSWSSNLLESWEYEGSLERQQANQQTLPKEIKVTEKTIPSWEKGPVNNEFGKSVNVSSNLVTQEPSPEETSTKRSIKQNSNPVKKEKSCKCNECGKAFSYCSALIRHQRTHTGEKPYKCNECEKAFSRSENLINHQRIHTGDKPYKCDQCGKGFIEGPSLTQHQRIHTGEKPYKCDECGKAFSQRTHLVQHQRIHTGEKPYTCNECGKAFSQRGHFMEHQKIHTGEKPFKCDECDKTFTRSTHLTQHQKIHTGEKTYKCNECGKAFNGPSTFIRHHMIHTGEKPYECNECGKAFSQHSNLTQHQKTHTGEKPYDCAECGKSFSYWSSLAQHLKIHTGEKPYKCNECGKAFSYCSSLTQHRRIHTREKPFECSECGKAFSYLSNLNQHQKTHTQEKAYECKECGKAFIRSSSLAKHERIHTGEKPYQCHECGKTFSYGSSLIQHRKIHTGERPYKCNECGRAFNQNIHLTQHKRIHTGAKPYECAECGKAFRHCSSLAQHQKTHTEEKPYQCNKCEKTFSQSSHLTQHQRIHTGEKPYKCNECDKAFSRSTHLTEHQNTHTGEKPYNCNECRKTFSQSTYLIQHQRIHSGEKPFGCNDCGKSFRYRSALNKHQRLHPGI</sequence>
<keyword id="KW-0238">DNA-binding</keyword>
<keyword id="KW-1017">Isopeptide bond</keyword>
<keyword id="KW-0479">Metal-binding</keyword>
<keyword id="KW-0539">Nucleus</keyword>
<keyword id="KW-0597">Phosphoprotein</keyword>
<keyword id="KW-1267">Proteomics identification</keyword>
<keyword id="KW-1185">Reference proteome</keyword>
<keyword id="KW-0677">Repeat</keyword>
<keyword id="KW-0804">Transcription</keyword>
<keyword id="KW-0805">Transcription regulation</keyword>
<keyword id="KW-0832">Ubl conjugation</keyword>
<keyword id="KW-0862">Zinc</keyword>
<keyword id="KW-0863">Zinc-finger</keyword>
<proteinExistence type="evidence at protein level"/>
<accession>Q99676</accession>
<accession>B2R715</accession>
<accession>O60792</accession>
<accession>Q8TBA9</accession>
<feature type="chain" id="PRO_0000047443" description="Zinc finger protein 184">
    <location>
        <begin position="1"/>
        <end position="751"/>
    </location>
</feature>
<feature type="domain" description="KRAB" evidence="2">
    <location>
        <begin position="28"/>
        <end position="99"/>
    </location>
</feature>
<feature type="zinc finger region" description="C2H2-type 1" evidence="1">
    <location>
        <begin position="222"/>
        <end position="244"/>
    </location>
</feature>
<feature type="zinc finger region" description="C2H2-type 2" evidence="1">
    <location>
        <begin position="250"/>
        <end position="272"/>
    </location>
</feature>
<feature type="zinc finger region" description="C2H2-type 3" evidence="1">
    <location>
        <begin position="278"/>
        <end position="300"/>
    </location>
</feature>
<feature type="zinc finger region" description="C2H2-type 4" evidence="1">
    <location>
        <begin position="306"/>
        <end position="328"/>
    </location>
</feature>
<feature type="zinc finger region" description="C2H2-type 5" evidence="1">
    <location>
        <begin position="334"/>
        <end position="356"/>
    </location>
</feature>
<feature type="zinc finger region" description="C2H2-type 6" evidence="1">
    <location>
        <begin position="362"/>
        <end position="384"/>
    </location>
</feature>
<feature type="zinc finger region" description="C2H2-type 7" evidence="1">
    <location>
        <begin position="390"/>
        <end position="412"/>
    </location>
</feature>
<feature type="zinc finger region" description="C2H2-type 8" evidence="1">
    <location>
        <begin position="418"/>
        <end position="440"/>
    </location>
</feature>
<feature type="zinc finger region" description="C2H2-type 9" evidence="1">
    <location>
        <begin position="446"/>
        <end position="468"/>
    </location>
</feature>
<feature type="zinc finger region" description="C2H2-type 10" evidence="1">
    <location>
        <begin position="474"/>
        <end position="496"/>
    </location>
</feature>
<feature type="zinc finger region" description="C2H2-type 11" evidence="1">
    <location>
        <begin position="502"/>
        <end position="524"/>
    </location>
</feature>
<feature type="zinc finger region" description="C2H2-type 12" evidence="1">
    <location>
        <begin position="530"/>
        <end position="552"/>
    </location>
</feature>
<feature type="zinc finger region" description="C2H2-type 13" evidence="1">
    <location>
        <begin position="558"/>
        <end position="580"/>
    </location>
</feature>
<feature type="zinc finger region" description="C2H2-type 14" evidence="1">
    <location>
        <begin position="586"/>
        <end position="608"/>
    </location>
</feature>
<feature type="zinc finger region" description="C2H2-type 15" evidence="1">
    <location>
        <begin position="614"/>
        <end position="636"/>
    </location>
</feature>
<feature type="zinc finger region" description="C2H2-type 16" evidence="1">
    <location>
        <begin position="642"/>
        <end position="664"/>
    </location>
</feature>
<feature type="zinc finger region" description="C2H2-type 17" evidence="1">
    <location>
        <begin position="670"/>
        <end position="692"/>
    </location>
</feature>
<feature type="zinc finger region" description="C2H2-type 18" evidence="1">
    <location>
        <begin position="698"/>
        <end position="720"/>
    </location>
</feature>
<feature type="zinc finger region" description="C2H2-type 19" evidence="1">
    <location>
        <begin position="726"/>
        <end position="748"/>
    </location>
</feature>
<feature type="region of interest" description="Disordered" evidence="3">
    <location>
        <begin position="191"/>
        <end position="212"/>
    </location>
</feature>
<feature type="compositionally biased region" description="Polar residues" evidence="3">
    <location>
        <begin position="191"/>
        <end position="202"/>
    </location>
</feature>
<feature type="modified residue" description="Phosphoserine" evidence="8 9">
    <location>
        <position position="117"/>
    </location>
</feature>
<feature type="modified residue" description="Phosphoserine" evidence="8">
    <location>
        <position position="122"/>
    </location>
</feature>
<feature type="modified residue" description="Phosphoserine" evidence="9">
    <location>
        <position position="199"/>
    </location>
</feature>
<feature type="cross-link" description="Glycyl lysine isopeptide (Lys-Gly) (interchain with G-Cter in SUMO2)" evidence="10">
    <location>
        <position position="206"/>
    </location>
</feature>
<feature type="sequence variant" id="VAR_045989" description="In dbSNP:rs1883216." evidence="4 5 6">
    <original>A</original>
    <variation>S</variation>
    <location>
        <position position="27"/>
    </location>
</feature>
<feature type="sequence conflict" description="In Ref. 1; BAG35662." evidence="7" ref="1">
    <original>G</original>
    <variation>C</variation>
    <location>
        <position position="286"/>
    </location>
</feature>
<feature type="sequence conflict" description="In Ref. 4; AAC51180." evidence="7" ref="4">
    <original>Q</original>
    <variation>R</variation>
    <location>
        <position position="295"/>
    </location>
</feature>
<feature type="sequence conflict" description="In Ref. 4; AAC51180." evidence="7" ref="4">
    <original>E</original>
    <variation>G</variation>
    <location>
        <position position="359"/>
    </location>
</feature>
<feature type="sequence conflict" description="In Ref. 4; AAC51180." evidence="7" ref="4">
    <original>QHQ</original>
    <variation>PHP</variation>
    <location>
        <begin position="379"/>
        <end position="381"/>
    </location>
</feature>
<feature type="sequence conflict" description="In Ref. 4; AAC51180." evidence="7" ref="4">
    <original>R</original>
    <variation>G</variation>
    <location>
        <position position="498"/>
    </location>
</feature>
<feature type="sequence conflict" description="In Ref. 4; AAC51180." evidence="7" ref="4">
    <original>Q</original>
    <variation>G</variation>
    <location>
        <position position="526"/>
    </location>
</feature>
<feature type="sequence conflict" description="In Ref. 4; AAC51180." evidence="7" ref="4">
    <original>K</original>
    <variation>E</variation>
    <location>
        <position position="533"/>
    </location>
</feature>
<feature type="sequence conflict" description="In Ref. 4; AAC51180." evidence="7" ref="4">
    <original>KHE</original>
    <variation>QHQ</variation>
    <location>
        <begin position="547"/>
        <end position="549"/>
    </location>
</feature>
<feature type="sequence conflict" description="In Ref. 4; AAC51180." evidence="7" ref="4">
    <original>R</original>
    <variation>K</variation>
    <location>
        <position position="746"/>
    </location>
</feature>
<gene>
    <name type="primary">ZNF184</name>
</gene>